<organism>
    <name type="scientific">Vibrio vulnificus (strain CMCP6)</name>
    <dbReference type="NCBI Taxonomy" id="216895"/>
    <lineage>
        <taxon>Bacteria</taxon>
        <taxon>Pseudomonadati</taxon>
        <taxon>Pseudomonadota</taxon>
        <taxon>Gammaproteobacteria</taxon>
        <taxon>Vibrionales</taxon>
        <taxon>Vibrionaceae</taxon>
        <taxon>Vibrio</taxon>
    </lineage>
</organism>
<feature type="chain" id="PRO_0000162662" description="Dual-specificity RNA pseudouridine synthase RluA">
    <location>
        <begin position="1"/>
        <end position="250"/>
    </location>
</feature>
<feature type="active site" evidence="1">
    <location>
        <position position="64"/>
    </location>
</feature>
<comment type="function">
    <text evidence="1">Dual specificity enzyme that catalyzes the synthesis of pseudouridine from uracil-746 in 23S ribosomal RNA and from uracil-32 in the anticodon stem and loop of transfer RNAs.</text>
</comment>
<comment type="catalytic activity">
    <reaction evidence="1">
        <text>uridine(32) in tRNA = pseudouridine(32) in tRNA</text>
        <dbReference type="Rhea" id="RHEA:42544"/>
        <dbReference type="Rhea" id="RHEA-COMP:10107"/>
        <dbReference type="Rhea" id="RHEA-COMP:10108"/>
        <dbReference type="ChEBI" id="CHEBI:65314"/>
        <dbReference type="ChEBI" id="CHEBI:65315"/>
        <dbReference type="EC" id="5.4.99.28"/>
    </reaction>
</comment>
<comment type="catalytic activity">
    <reaction evidence="1">
        <text>uridine(746) in 23S rRNA = pseudouridine(746) in 23S rRNA</text>
        <dbReference type="Rhea" id="RHEA:42548"/>
        <dbReference type="Rhea" id="RHEA-COMP:10109"/>
        <dbReference type="Rhea" id="RHEA-COMP:10110"/>
        <dbReference type="ChEBI" id="CHEBI:65314"/>
        <dbReference type="ChEBI" id="CHEBI:65315"/>
        <dbReference type="EC" id="5.4.99.29"/>
    </reaction>
</comment>
<comment type="similarity">
    <text evidence="2">Belongs to the pseudouridine synthase RluA family.</text>
</comment>
<keyword id="KW-0413">Isomerase</keyword>
<keyword id="KW-0698">rRNA processing</keyword>
<keyword id="KW-0819">tRNA processing</keyword>
<protein>
    <recommendedName>
        <fullName evidence="1">Dual-specificity RNA pseudouridine synthase RluA</fullName>
        <ecNumber evidence="1">5.4.99.28</ecNumber>
        <ecNumber evidence="1">5.4.99.29</ecNumber>
    </recommendedName>
    <alternativeName>
        <fullName evidence="1">23S rRNA pseudouridine(746) synthase</fullName>
    </alternativeName>
    <alternativeName>
        <fullName evidence="1">Ribosomal large subunit pseudouridine synthase A</fullName>
    </alternativeName>
    <alternativeName>
        <fullName evidence="1">rRNA pseudouridylate synthase A</fullName>
    </alternativeName>
    <alternativeName>
        <fullName evidence="1">rRNA-uridine isomerase A</fullName>
    </alternativeName>
    <alternativeName>
        <fullName evidence="1">tRNA pseudouridine(32) synthase</fullName>
    </alternativeName>
</protein>
<gene>
    <name type="primary">rluA</name>
    <name type="ordered locus">VV1_1461</name>
</gene>
<reference key="1">
    <citation type="submission" date="2002-12" db="EMBL/GenBank/DDBJ databases">
        <title>Complete genome sequence of Vibrio vulnificus CMCP6.</title>
        <authorList>
            <person name="Rhee J.H."/>
            <person name="Kim S.Y."/>
            <person name="Chung S.S."/>
            <person name="Kim J.J."/>
            <person name="Moon Y.H."/>
            <person name="Jeong H."/>
            <person name="Choy H.E."/>
        </authorList>
    </citation>
    <scope>NUCLEOTIDE SEQUENCE [LARGE SCALE GENOMIC DNA]</scope>
    <source>
        <strain>CMCP6</strain>
    </source>
</reference>
<evidence type="ECO:0000250" key="1">
    <source>
        <dbReference type="UniProtKB" id="P0AA37"/>
    </source>
</evidence>
<evidence type="ECO:0000305" key="2"/>
<proteinExistence type="inferred from homology"/>
<accession>Q8DCG0</accession>
<name>RLUA_VIBVU</name>
<dbReference type="EC" id="5.4.99.28" evidence="1"/>
<dbReference type="EC" id="5.4.99.29" evidence="1"/>
<dbReference type="EMBL" id="AE016795">
    <property type="protein sequence ID" value="AAO09900.1"/>
    <property type="molecule type" value="Genomic_DNA"/>
</dbReference>
<dbReference type="RefSeq" id="WP_011079418.1">
    <property type="nucleotide sequence ID" value="NC_004459.3"/>
</dbReference>
<dbReference type="SMR" id="Q8DCG0"/>
<dbReference type="KEGG" id="vvu:VV1_1461"/>
<dbReference type="HOGENOM" id="CLU_016902_11_1_6"/>
<dbReference type="Proteomes" id="UP000002275">
    <property type="component" value="Chromosome 1"/>
</dbReference>
<dbReference type="GO" id="GO:0160142">
    <property type="term" value="F:23S rRNA pseudouridine(746) synthase activity"/>
    <property type="evidence" value="ECO:0007669"/>
    <property type="project" value="UniProtKB-EC"/>
</dbReference>
<dbReference type="GO" id="GO:0003723">
    <property type="term" value="F:RNA binding"/>
    <property type="evidence" value="ECO:0007669"/>
    <property type="project" value="InterPro"/>
</dbReference>
<dbReference type="GO" id="GO:0160151">
    <property type="term" value="F:tRNA pseudouridine(32) synthase activity"/>
    <property type="evidence" value="ECO:0007669"/>
    <property type="project" value="UniProtKB-EC"/>
</dbReference>
<dbReference type="GO" id="GO:0000455">
    <property type="term" value="P:enzyme-directed rRNA pseudouridine synthesis"/>
    <property type="evidence" value="ECO:0007669"/>
    <property type="project" value="TreeGrafter"/>
</dbReference>
<dbReference type="GO" id="GO:0008033">
    <property type="term" value="P:tRNA processing"/>
    <property type="evidence" value="ECO:0007669"/>
    <property type="project" value="UniProtKB-KW"/>
</dbReference>
<dbReference type="CDD" id="cd02869">
    <property type="entry name" value="PseudoU_synth_RluA_like"/>
    <property type="match status" value="1"/>
</dbReference>
<dbReference type="FunFam" id="3.30.2350.10:FF:000005">
    <property type="entry name" value="Pseudouridine synthase"/>
    <property type="match status" value="1"/>
</dbReference>
<dbReference type="Gene3D" id="3.30.2350.10">
    <property type="entry name" value="Pseudouridine synthase"/>
    <property type="match status" value="1"/>
</dbReference>
<dbReference type="InterPro" id="IPR020103">
    <property type="entry name" value="PsdUridine_synth_cat_dom_sf"/>
</dbReference>
<dbReference type="InterPro" id="IPR006224">
    <property type="entry name" value="PsdUridine_synth_RluA-like_CS"/>
</dbReference>
<dbReference type="InterPro" id="IPR006145">
    <property type="entry name" value="PsdUridine_synth_RsuA/RluA"/>
</dbReference>
<dbReference type="InterPro" id="IPR050188">
    <property type="entry name" value="RluA_PseudoU_synthase"/>
</dbReference>
<dbReference type="NCBIfam" id="NF007543">
    <property type="entry name" value="PRK10158.1"/>
    <property type="match status" value="1"/>
</dbReference>
<dbReference type="PANTHER" id="PTHR21600:SF91">
    <property type="entry name" value="DUAL-SPECIFICITY RNA PSEUDOURIDINE SYNTHASE RLUA"/>
    <property type="match status" value="1"/>
</dbReference>
<dbReference type="PANTHER" id="PTHR21600">
    <property type="entry name" value="MITOCHONDRIAL RNA PSEUDOURIDINE SYNTHASE"/>
    <property type="match status" value="1"/>
</dbReference>
<dbReference type="Pfam" id="PF00849">
    <property type="entry name" value="PseudoU_synth_2"/>
    <property type="match status" value="1"/>
</dbReference>
<dbReference type="SUPFAM" id="SSF55120">
    <property type="entry name" value="Pseudouridine synthase"/>
    <property type="match status" value="1"/>
</dbReference>
<dbReference type="PROSITE" id="PS01129">
    <property type="entry name" value="PSI_RLU"/>
    <property type="match status" value="1"/>
</dbReference>
<sequence length="250" mass="28897">MAMLEYLPPTDPWTEIIFEDDHILAVNKPSGLLSVPGRLPEHHDSMWSRLQEQYPEIQVVHRLDMSTSGLMVFAKNKRAEAALKKQFQYRLTHKVYYARVWGHVEADSGMIDLPLICDWPNRPMQKVCHEHGKPSQTAFQVAKREVHANGAQTTIMRLLPVTGRSHQLRVHMQALGHPIVGDEFYAQGDAFTFSERLELHAAELSFYHPKSHWLRSLFVPCDFYPDAEEMIFSYFDPARKLPDYKSLPKS</sequence>